<reference key="1">
    <citation type="journal article" date="2004" name="Mol. Cell. Biol.">
        <title>DNA cross-link repair protein SNM1A interacts with PIAS1 in nuclear focus formation.</title>
        <authorList>
            <person name="Ishiai M."/>
            <person name="Kimura M."/>
            <person name="Namikoshi K."/>
            <person name="Yamazoe M."/>
            <person name="Yamamoto K."/>
            <person name="Arakawa H."/>
            <person name="Agematsu K."/>
            <person name="Matsushita N."/>
            <person name="Takeda S."/>
            <person name="Buerstedde J.-M."/>
            <person name="Takata M."/>
        </authorList>
    </citation>
    <scope>NUCLEOTIDE SEQUENCE [MRNA]</scope>
    <scope>FUNCTION</scope>
</reference>
<dbReference type="EC" id="3.1.-.-"/>
<dbReference type="EC" id="3.5.2.6" evidence="2"/>
<dbReference type="EMBL" id="AY376897">
    <property type="protein sequence ID" value="AAR27405.1"/>
    <property type="molecule type" value="mRNA"/>
</dbReference>
<dbReference type="RefSeq" id="NP_001026671.3">
    <property type="nucleotide sequence ID" value="NM_001031500.3"/>
</dbReference>
<dbReference type="SMR" id="Q5QJC3"/>
<dbReference type="FunCoup" id="Q5QJC3">
    <property type="interactions" value="465"/>
</dbReference>
<dbReference type="PaxDb" id="9031-ENSGALP00000041920"/>
<dbReference type="GeneID" id="428269"/>
<dbReference type="KEGG" id="gga:428269"/>
<dbReference type="CTD" id="64858"/>
<dbReference type="VEuPathDB" id="HostDB:geneid_428269"/>
<dbReference type="eggNOG" id="KOG1361">
    <property type="taxonomic scope" value="Eukaryota"/>
</dbReference>
<dbReference type="InParanoid" id="Q5QJC3"/>
<dbReference type="OrthoDB" id="262529at2759"/>
<dbReference type="PhylomeDB" id="Q5QJC3"/>
<dbReference type="PRO" id="PR:Q5QJC3"/>
<dbReference type="Proteomes" id="UP000000539">
    <property type="component" value="Unassembled WGS sequence"/>
</dbReference>
<dbReference type="GO" id="GO:0005813">
    <property type="term" value="C:centrosome"/>
    <property type="evidence" value="ECO:0000250"/>
    <property type="project" value="UniProtKB"/>
</dbReference>
<dbReference type="GO" id="GO:0000781">
    <property type="term" value="C:chromosome, telomeric region"/>
    <property type="evidence" value="ECO:0000250"/>
    <property type="project" value="UniProtKB"/>
</dbReference>
<dbReference type="GO" id="GO:0005634">
    <property type="term" value="C:nucleus"/>
    <property type="evidence" value="ECO:0007669"/>
    <property type="project" value="UniProtKB-SubCell"/>
</dbReference>
<dbReference type="GO" id="GO:0035312">
    <property type="term" value="F:5'-3' DNA exonuclease activity"/>
    <property type="evidence" value="ECO:0000318"/>
    <property type="project" value="GO_Central"/>
</dbReference>
<dbReference type="GO" id="GO:0008409">
    <property type="term" value="F:5'-3' exonuclease activity"/>
    <property type="evidence" value="ECO:0000250"/>
    <property type="project" value="UniProtKB"/>
</dbReference>
<dbReference type="GO" id="GO:0008800">
    <property type="term" value="F:beta-lactamase activity"/>
    <property type="evidence" value="ECO:0000250"/>
    <property type="project" value="UniProtKB"/>
</dbReference>
<dbReference type="GO" id="GO:0003684">
    <property type="term" value="F:damaged DNA binding"/>
    <property type="evidence" value="ECO:0000318"/>
    <property type="project" value="GO_Central"/>
</dbReference>
<dbReference type="GO" id="GO:0006303">
    <property type="term" value="P:double-strand break repair via nonhomologous end joining"/>
    <property type="evidence" value="ECO:0000318"/>
    <property type="project" value="GO_Central"/>
</dbReference>
<dbReference type="GO" id="GO:0036297">
    <property type="term" value="P:interstrand cross-link repair"/>
    <property type="evidence" value="ECO:0000318"/>
    <property type="project" value="GO_Central"/>
</dbReference>
<dbReference type="GO" id="GO:0031848">
    <property type="term" value="P:protection from non-homologous end joining at telomere"/>
    <property type="evidence" value="ECO:0000250"/>
    <property type="project" value="UniProtKB"/>
</dbReference>
<dbReference type="GO" id="GO:0000723">
    <property type="term" value="P:telomere maintenance"/>
    <property type="evidence" value="ECO:0000250"/>
    <property type="project" value="UniProtKB"/>
</dbReference>
<dbReference type="GO" id="GO:0031860">
    <property type="term" value="P:telomeric 3' overhang formation"/>
    <property type="evidence" value="ECO:0000250"/>
    <property type="project" value="UniProtKB"/>
</dbReference>
<dbReference type="GO" id="GO:0031627">
    <property type="term" value="P:telomeric loop formation"/>
    <property type="evidence" value="ECO:0000250"/>
    <property type="project" value="UniProtKB"/>
</dbReference>
<dbReference type="CDD" id="cd11662">
    <property type="entry name" value="apollo_TRF2_binding"/>
    <property type="match status" value="1"/>
</dbReference>
<dbReference type="CDD" id="cd16273">
    <property type="entry name" value="SNM1A-1C-like_MBL-fold"/>
    <property type="match status" value="1"/>
</dbReference>
<dbReference type="FunFam" id="3.40.50.12650:FF:000003">
    <property type="entry name" value="DNA cross-link repair 1B"/>
    <property type="match status" value="1"/>
</dbReference>
<dbReference type="Gene3D" id="3.40.50.12650">
    <property type="match status" value="1"/>
</dbReference>
<dbReference type="Gene3D" id="3.60.15.10">
    <property type="entry name" value="Ribonuclease Z/Hydroxyacylglutathione hydrolase-like"/>
    <property type="match status" value="1"/>
</dbReference>
<dbReference type="InterPro" id="IPR011084">
    <property type="entry name" value="DRMBL"/>
</dbReference>
<dbReference type="InterPro" id="IPR001279">
    <property type="entry name" value="Metallo-B-lactamas"/>
</dbReference>
<dbReference type="InterPro" id="IPR036866">
    <property type="entry name" value="RibonucZ/Hydroxyglut_hydro"/>
</dbReference>
<dbReference type="PANTHER" id="PTHR23240:SF26">
    <property type="entry name" value="5' EXONUCLEASE APOLLO"/>
    <property type="match status" value="1"/>
</dbReference>
<dbReference type="PANTHER" id="PTHR23240">
    <property type="entry name" value="DNA CROSS-LINK REPAIR PROTEIN PSO2/SNM1-RELATED"/>
    <property type="match status" value="1"/>
</dbReference>
<dbReference type="Pfam" id="PF07522">
    <property type="entry name" value="DRMBL"/>
    <property type="match status" value="1"/>
</dbReference>
<dbReference type="Pfam" id="PF12706">
    <property type="entry name" value="Lactamase_B_2"/>
    <property type="match status" value="1"/>
</dbReference>
<dbReference type="SMART" id="SM00849">
    <property type="entry name" value="Lactamase_B"/>
    <property type="match status" value="1"/>
</dbReference>
<dbReference type="SUPFAM" id="SSF56281">
    <property type="entry name" value="Metallo-hydrolase/oxidoreductase"/>
    <property type="match status" value="1"/>
</dbReference>
<name>DCR1B_CHICK</name>
<accession>Q5QJC3</accession>
<proteinExistence type="evidence at transcript level"/>
<sequence length="457" mass="50830">MNGTVIPGTPIAVDFWSVRRAGGARLFFLSHMHSDHTVGLSSTWSRPLYCSPLTARLLHHRLKVPTRWIRPLEVGQSHAVGEEVTVTLLDANHCPGSVMFLFEGAFGTILYTGDFRYSPAMQREPALSGRRIDRLYLDNTNCRPHGALPSRSRAALQAAQLIRRHPQHRVVIGVYSLGKEELLVDLALEFGTWVVVSPSRLEQMRLLELPEVFTTEEGAGRIHAVDVAEIRWDTLVSWNVLHPTIAILPTGRPVKVTHPQIHLIPYSDHSSFSELCEFVKWLKPCSVIPIVKGDMCYASFQKYLSPDHQALPGLGIPKPLQVSVQWQSKTKKQKPVCLVKRAAQHSVPKGVVYEPLEEYIEQSDGLGGVTAPQQNSHESAFCSLEDGICFYDCKEEELSGEQPGGAMAAGTAGQSLVSDEDFPSELPKQYLLTPLNALKQSSFCKALKNLFIRWEPS</sequence>
<evidence type="ECO:0000250" key="1"/>
<evidence type="ECO:0000250" key="2">
    <source>
        <dbReference type="UniProtKB" id="Q9H816"/>
    </source>
</evidence>
<evidence type="ECO:0000269" key="3">
    <source>
    </source>
</evidence>
<evidence type="ECO:0000305" key="4"/>
<keyword id="KW-0158">Chromosome</keyword>
<keyword id="KW-0227">DNA damage</keyword>
<keyword id="KW-0234">DNA repair</keyword>
<keyword id="KW-0269">Exonuclease</keyword>
<keyword id="KW-0378">Hydrolase</keyword>
<keyword id="KW-0540">Nuclease</keyword>
<keyword id="KW-0539">Nucleus</keyword>
<keyword id="KW-1185">Reference proteome</keyword>
<keyword id="KW-0779">Telomere</keyword>
<comment type="function">
    <text evidence="1 3">5'-3' exonuclease that plays a central role in telomere maintenance and protection during S-phase. Participates in the protection of telomeres against non-homologous end-joining (NHEJ)-mediated repair, thereby ensuring that telomeres do not fuse. Plays a key role in telomeric loop (T loop) formation by being recruited by TERF2 at the leading end telomeres and by processing leading-end telomeres immediately after their replication via its exonuclease activity: generates 3' single-stranded overhang at the leading end telomeres avoiding blunt leading-end telomeres that are vulnerable to end-joining reactions and expose the telomere end in a manner that activates the DNA repair pathways (By similarity). May be required for DNA interstrand cross-link repair (PubMed:15572677). Possesses beta-lactamase activity, catalyzing the hydrolysis of penicillin G and nitrocefin (By similarity). Exhibits no activity towards other beta-lactam antibiotic classes including cephalosporins (cefotaxime) and carbapenems (imipenem) (By similarity).</text>
</comment>
<comment type="catalytic activity">
    <reaction evidence="2">
        <text>a beta-lactam + H2O = a substituted beta-amino acid</text>
        <dbReference type="Rhea" id="RHEA:20401"/>
        <dbReference type="ChEBI" id="CHEBI:15377"/>
        <dbReference type="ChEBI" id="CHEBI:35627"/>
        <dbReference type="ChEBI" id="CHEBI:140347"/>
        <dbReference type="EC" id="3.5.2.6"/>
    </reaction>
</comment>
<comment type="subunit">
    <text evidence="1">Interacts with TERF2; the interaction is direct.</text>
</comment>
<comment type="subcellular location">
    <subcellularLocation>
        <location evidence="1">Chromosome</location>
        <location evidence="1">Telomere</location>
    </subcellularLocation>
    <subcellularLocation>
        <location evidence="1">Nucleus</location>
    </subcellularLocation>
</comment>
<comment type="domain">
    <text evidence="1">The TBM domain mediates interaction with TERF2.</text>
</comment>
<comment type="similarity">
    <text evidence="4">Belongs to the DNA repair metallo-beta-lactamase (DRMBL) family.</text>
</comment>
<feature type="chain" id="PRO_0000209121" description="5' exonuclease Apollo">
    <location>
        <begin position="1"/>
        <end position="457"/>
    </location>
</feature>
<feature type="short sequence motif" description="TBM">
    <location>
        <begin position="425"/>
        <end position="437"/>
    </location>
</feature>
<gene>
    <name type="primary">DCLRE1B</name>
    <name type="synonym">SNM1B</name>
</gene>
<protein>
    <recommendedName>
        <fullName>5' exonuclease Apollo</fullName>
        <ecNumber>3.1.-.-</ecNumber>
    </recommendedName>
    <alternativeName>
        <fullName>Beta-lactamase MBLAC2</fullName>
        <ecNumber evidence="2">3.5.2.6</ecNumber>
    </alternativeName>
    <alternativeName>
        <fullName>DNA cross-link repair 1B protein</fullName>
    </alternativeName>
    <alternativeName>
        <fullName>SNM1 homolog B</fullName>
    </alternativeName>
</protein>
<organism>
    <name type="scientific">Gallus gallus</name>
    <name type="common">Chicken</name>
    <dbReference type="NCBI Taxonomy" id="9031"/>
    <lineage>
        <taxon>Eukaryota</taxon>
        <taxon>Metazoa</taxon>
        <taxon>Chordata</taxon>
        <taxon>Craniata</taxon>
        <taxon>Vertebrata</taxon>
        <taxon>Euteleostomi</taxon>
        <taxon>Archelosauria</taxon>
        <taxon>Archosauria</taxon>
        <taxon>Dinosauria</taxon>
        <taxon>Saurischia</taxon>
        <taxon>Theropoda</taxon>
        <taxon>Coelurosauria</taxon>
        <taxon>Aves</taxon>
        <taxon>Neognathae</taxon>
        <taxon>Galloanserae</taxon>
        <taxon>Galliformes</taxon>
        <taxon>Phasianidae</taxon>
        <taxon>Phasianinae</taxon>
        <taxon>Gallus</taxon>
    </lineage>
</organism>